<name>FABF_VIBHA</name>
<keyword id="KW-0012">Acyltransferase</keyword>
<keyword id="KW-0275">Fatty acid biosynthesis</keyword>
<keyword id="KW-0276">Fatty acid metabolism</keyword>
<keyword id="KW-0444">Lipid biosynthesis</keyword>
<keyword id="KW-0443">Lipid metabolism</keyword>
<keyword id="KW-0808">Transferase</keyword>
<gene>
    <name type="primary">fabF</name>
</gene>
<organism>
    <name type="scientific">Vibrio harveyi</name>
    <name type="common">Beneckea harveyi</name>
    <dbReference type="NCBI Taxonomy" id="669"/>
    <lineage>
        <taxon>Bacteria</taxon>
        <taxon>Pseudomonadati</taxon>
        <taxon>Pseudomonadota</taxon>
        <taxon>Gammaproteobacteria</taxon>
        <taxon>Vibrionales</taxon>
        <taxon>Vibrionaceae</taxon>
        <taxon>Vibrio</taxon>
    </lineage>
</organism>
<dbReference type="EC" id="2.3.1.179" evidence="2"/>
<dbReference type="EMBL" id="U39441">
    <property type="protein sequence ID" value="AAC43591.1"/>
    <property type="molecule type" value="Genomic_DNA"/>
</dbReference>
<dbReference type="PIR" id="T12053">
    <property type="entry name" value="T12053"/>
</dbReference>
<dbReference type="RefSeq" id="WP_005444811.1">
    <property type="nucleotide sequence ID" value="NZ_AP031614.1"/>
</dbReference>
<dbReference type="SMR" id="P55338"/>
<dbReference type="STRING" id="669.AL538_03885"/>
<dbReference type="GeneID" id="83581137"/>
<dbReference type="PATRIC" id="fig|669.45.peg.2978"/>
<dbReference type="OrthoDB" id="9808669at2"/>
<dbReference type="UniPathway" id="UPA00094"/>
<dbReference type="GO" id="GO:0005829">
    <property type="term" value="C:cytosol"/>
    <property type="evidence" value="ECO:0007669"/>
    <property type="project" value="TreeGrafter"/>
</dbReference>
<dbReference type="GO" id="GO:0004315">
    <property type="term" value="F:3-oxoacyl-[acyl-carrier-protein] synthase activity"/>
    <property type="evidence" value="ECO:0007669"/>
    <property type="project" value="UniProtKB-EC"/>
</dbReference>
<dbReference type="GO" id="GO:0006633">
    <property type="term" value="P:fatty acid biosynthetic process"/>
    <property type="evidence" value="ECO:0007669"/>
    <property type="project" value="UniProtKB-UniPathway"/>
</dbReference>
<dbReference type="CDD" id="cd00834">
    <property type="entry name" value="KAS_I_II"/>
    <property type="match status" value="1"/>
</dbReference>
<dbReference type="FunFam" id="3.40.47.10:FF:000009">
    <property type="entry name" value="3-oxoacyl-[acyl-carrier-protein] synthase 2"/>
    <property type="match status" value="1"/>
</dbReference>
<dbReference type="Gene3D" id="3.40.47.10">
    <property type="match status" value="1"/>
</dbReference>
<dbReference type="InterPro" id="IPR017568">
    <property type="entry name" value="3-oxoacyl-ACP_synth-2"/>
</dbReference>
<dbReference type="InterPro" id="IPR000794">
    <property type="entry name" value="Beta-ketoacyl_synthase"/>
</dbReference>
<dbReference type="InterPro" id="IPR018201">
    <property type="entry name" value="Ketoacyl_synth_AS"/>
</dbReference>
<dbReference type="InterPro" id="IPR014031">
    <property type="entry name" value="Ketoacyl_synth_C"/>
</dbReference>
<dbReference type="InterPro" id="IPR014030">
    <property type="entry name" value="Ketoacyl_synth_N"/>
</dbReference>
<dbReference type="InterPro" id="IPR020841">
    <property type="entry name" value="PKS_Beta-ketoAc_synthase_dom"/>
</dbReference>
<dbReference type="InterPro" id="IPR016039">
    <property type="entry name" value="Thiolase-like"/>
</dbReference>
<dbReference type="NCBIfam" id="TIGR03150">
    <property type="entry name" value="fabF"/>
    <property type="match status" value="1"/>
</dbReference>
<dbReference type="NCBIfam" id="NF004970">
    <property type="entry name" value="PRK06333.1"/>
    <property type="match status" value="1"/>
</dbReference>
<dbReference type="NCBIfam" id="NF005589">
    <property type="entry name" value="PRK07314.1"/>
    <property type="match status" value="1"/>
</dbReference>
<dbReference type="NCBIfam" id="NF006434">
    <property type="entry name" value="PRK08722.1"/>
    <property type="match status" value="1"/>
</dbReference>
<dbReference type="PANTHER" id="PTHR11712:SF336">
    <property type="entry name" value="3-OXOACYL-[ACYL-CARRIER-PROTEIN] SYNTHASE, MITOCHONDRIAL"/>
    <property type="match status" value="1"/>
</dbReference>
<dbReference type="PANTHER" id="PTHR11712">
    <property type="entry name" value="POLYKETIDE SYNTHASE-RELATED"/>
    <property type="match status" value="1"/>
</dbReference>
<dbReference type="Pfam" id="PF00109">
    <property type="entry name" value="ketoacyl-synt"/>
    <property type="match status" value="1"/>
</dbReference>
<dbReference type="Pfam" id="PF02801">
    <property type="entry name" value="Ketoacyl-synt_C"/>
    <property type="match status" value="1"/>
</dbReference>
<dbReference type="PIRSF" id="PIRSF000447">
    <property type="entry name" value="KAS_II"/>
    <property type="match status" value="1"/>
</dbReference>
<dbReference type="SMART" id="SM00825">
    <property type="entry name" value="PKS_KS"/>
    <property type="match status" value="1"/>
</dbReference>
<dbReference type="SUPFAM" id="SSF53901">
    <property type="entry name" value="Thiolase-like"/>
    <property type="match status" value="2"/>
</dbReference>
<dbReference type="PROSITE" id="PS00606">
    <property type="entry name" value="KS3_1"/>
    <property type="match status" value="1"/>
</dbReference>
<dbReference type="PROSITE" id="PS52004">
    <property type="entry name" value="KS3_2"/>
    <property type="match status" value="1"/>
</dbReference>
<reference key="1">
    <citation type="journal article" date="1996" name="J. Bacteriol.">
        <title>Isolation of Vibrio harveyi acyl carrier protein and the fabG, acpP, and fabF genes involved in fatty acid biosynthesis.</title>
        <authorList>
            <person name="Shen Z."/>
            <person name="Byers D.M."/>
        </authorList>
    </citation>
    <scope>NUCLEOTIDE SEQUENCE [GENOMIC DNA]</scope>
    <source>
        <strain>ATCC 33843 / NCIMB 1871 / 392 / MAV</strain>
    </source>
</reference>
<evidence type="ECO:0000250" key="1"/>
<evidence type="ECO:0000250" key="2">
    <source>
        <dbReference type="UniProtKB" id="P0AAI5"/>
    </source>
</evidence>
<evidence type="ECO:0000255" key="3">
    <source>
        <dbReference type="PROSITE-ProRule" id="PRU01348"/>
    </source>
</evidence>
<evidence type="ECO:0000305" key="4"/>
<protein>
    <recommendedName>
        <fullName>3-oxoacyl-[acyl-carrier-protein] synthase 2</fullName>
        <ecNumber evidence="2">2.3.1.179</ecNumber>
    </recommendedName>
    <alternativeName>
        <fullName>3-oxoacyl-[acyl-carrier-protein] synthase II</fullName>
    </alternativeName>
    <alternativeName>
        <fullName>Beta-ketoacyl-ACP synthase II</fullName>
        <shortName>KAS II</shortName>
    </alternativeName>
</protein>
<accession>P55338</accession>
<sequence>MSKRRVVVTGMGMLSPVGNTVESSWKALLEGQSGIVNIEHFDATNFSTRFAGLVKDFDCTEYMSKKDARKMDLFIQYGIAAGIQALDDSGLEITEENAARVGVAIGSGIGGLDLIEAGHSALVEKGPRKVSPFFVPSTIVNMVAGNLSIMRGLRGPNIAISTACTTGLHNIGHAARMIAYGDAEAMVAGGAEKASTPLGMAGFGAAKALSTRNDEPQKASRPWDKGRDGFVLGDGAGVMVLEEYEHAKARGAKIYAELVGFGMSGDAYHMTSPSEDGSGGALAMEAAMRDANITGTQVGYVNAHGTSTPAGDVAEIKGVKRALGEEGSKQVLVSSTKSMTGHLLGAAGSVEAIITVLSLVDQIVPPTINLDDPEEGLDIDLVPHTARKVDMEYAICNSFGFGGTNGSLVFKKIAE</sequence>
<comment type="function">
    <text evidence="2">Involved in the type II fatty acid elongation cycle. Catalyzes the elongation of a wide range of acyl-ACP by the addition of two carbons from malonyl-ACP to an acyl acceptor. Can efficiently catalyze the conversion of palmitoleoyl-ACP (cis-hexadec-9-enoyl-ACP) to cis-vaccenoyl-ACP (cis-octadec-11-enoyl-ACP), an essential step in the thermal regulation of fatty acid composition.</text>
</comment>
<comment type="catalytic activity">
    <reaction evidence="2">
        <text>a fatty acyl-[ACP] + malonyl-[ACP] + H(+) = a 3-oxoacyl-[ACP] + holo-[ACP] + CO2</text>
        <dbReference type="Rhea" id="RHEA:22836"/>
        <dbReference type="Rhea" id="RHEA-COMP:9623"/>
        <dbReference type="Rhea" id="RHEA-COMP:9685"/>
        <dbReference type="Rhea" id="RHEA-COMP:9916"/>
        <dbReference type="Rhea" id="RHEA-COMP:14125"/>
        <dbReference type="ChEBI" id="CHEBI:15378"/>
        <dbReference type="ChEBI" id="CHEBI:16526"/>
        <dbReference type="ChEBI" id="CHEBI:64479"/>
        <dbReference type="ChEBI" id="CHEBI:78449"/>
        <dbReference type="ChEBI" id="CHEBI:78776"/>
        <dbReference type="ChEBI" id="CHEBI:138651"/>
    </reaction>
</comment>
<comment type="catalytic activity">
    <reaction evidence="2">
        <text>(9Z)-hexadecenoyl-[ACP] + malonyl-[ACP] + H(+) = 3-oxo-(11Z)-octadecenoyl-[ACP] + holo-[ACP] + CO2</text>
        <dbReference type="Rhea" id="RHEA:55040"/>
        <dbReference type="Rhea" id="RHEA-COMP:9623"/>
        <dbReference type="Rhea" id="RHEA-COMP:9685"/>
        <dbReference type="Rhea" id="RHEA-COMP:10800"/>
        <dbReference type="Rhea" id="RHEA-COMP:14074"/>
        <dbReference type="ChEBI" id="CHEBI:15378"/>
        <dbReference type="ChEBI" id="CHEBI:16526"/>
        <dbReference type="ChEBI" id="CHEBI:64479"/>
        <dbReference type="ChEBI" id="CHEBI:78449"/>
        <dbReference type="ChEBI" id="CHEBI:83989"/>
        <dbReference type="ChEBI" id="CHEBI:138538"/>
        <dbReference type="EC" id="2.3.1.179"/>
    </reaction>
</comment>
<comment type="pathway">
    <text evidence="2">Lipid metabolism; fatty acid biosynthesis.</text>
</comment>
<comment type="subunit">
    <text evidence="2">Homodimer.</text>
</comment>
<comment type="similarity">
    <text evidence="4">Belongs to the thiolase-like superfamily. Beta-ketoacyl-ACP synthases family.</text>
</comment>
<feature type="initiator methionine" description="Removed" evidence="1">
    <location>
        <position position="1"/>
    </location>
</feature>
<feature type="chain" id="PRO_0000180328" description="3-oxoacyl-[acyl-carrier-protein] synthase 2">
    <location>
        <begin position="2"/>
        <end position="415"/>
    </location>
</feature>
<feature type="domain" description="Ketosynthase family 3 (KS3)" evidence="3">
    <location>
        <begin position="3"/>
        <end position="412"/>
    </location>
</feature>
<feature type="active site" description="For beta-ketoacyl synthase activity" evidence="3">
    <location>
        <position position="164"/>
    </location>
</feature>
<feature type="active site" description="For beta-ketoacyl synthase activity" evidence="3">
    <location>
        <position position="304"/>
    </location>
</feature>
<feature type="active site" description="For beta-ketoacyl synthase activity" evidence="3">
    <location>
        <position position="342"/>
    </location>
</feature>
<proteinExistence type="inferred from homology"/>